<organism>
    <name type="scientific">Streptococcus thermophilus (strain ATCC BAA-491 / LMD-9)</name>
    <dbReference type="NCBI Taxonomy" id="322159"/>
    <lineage>
        <taxon>Bacteria</taxon>
        <taxon>Bacillati</taxon>
        <taxon>Bacillota</taxon>
        <taxon>Bacilli</taxon>
        <taxon>Lactobacillales</taxon>
        <taxon>Streptococcaceae</taxon>
        <taxon>Streptococcus</taxon>
    </lineage>
</organism>
<comment type="function">
    <text evidence="1">Binds directly to 23S rRNA. The L1 stalk is quite mobile in the ribosome, and is involved in E site tRNA release.</text>
</comment>
<comment type="function">
    <text evidence="1">Protein L1 is also a translational repressor protein, it controls the translation of the L11 operon by binding to its mRNA.</text>
</comment>
<comment type="subunit">
    <text evidence="1">Part of the 50S ribosomal subunit.</text>
</comment>
<comment type="similarity">
    <text evidence="1">Belongs to the universal ribosomal protein uL1 family.</text>
</comment>
<reference key="1">
    <citation type="journal article" date="2006" name="Proc. Natl. Acad. Sci. U.S.A.">
        <title>Comparative genomics of the lactic acid bacteria.</title>
        <authorList>
            <person name="Makarova K.S."/>
            <person name="Slesarev A."/>
            <person name="Wolf Y.I."/>
            <person name="Sorokin A."/>
            <person name="Mirkin B."/>
            <person name="Koonin E.V."/>
            <person name="Pavlov A."/>
            <person name="Pavlova N."/>
            <person name="Karamychev V."/>
            <person name="Polouchine N."/>
            <person name="Shakhova V."/>
            <person name="Grigoriev I."/>
            <person name="Lou Y."/>
            <person name="Rohksar D."/>
            <person name="Lucas S."/>
            <person name="Huang K."/>
            <person name="Goodstein D.M."/>
            <person name="Hawkins T."/>
            <person name="Plengvidhya V."/>
            <person name="Welker D."/>
            <person name="Hughes J."/>
            <person name="Goh Y."/>
            <person name="Benson A."/>
            <person name="Baldwin K."/>
            <person name="Lee J.-H."/>
            <person name="Diaz-Muniz I."/>
            <person name="Dosti B."/>
            <person name="Smeianov V."/>
            <person name="Wechter W."/>
            <person name="Barabote R."/>
            <person name="Lorca G."/>
            <person name="Altermann E."/>
            <person name="Barrangou R."/>
            <person name="Ganesan B."/>
            <person name="Xie Y."/>
            <person name="Rawsthorne H."/>
            <person name="Tamir D."/>
            <person name="Parker C."/>
            <person name="Breidt F."/>
            <person name="Broadbent J.R."/>
            <person name="Hutkins R."/>
            <person name="O'Sullivan D."/>
            <person name="Steele J."/>
            <person name="Unlu G."/>
            <person name="Saier M.H. Jr."/>
            <person name="Klaenhammer T."/>
            <person name="Richardson P."/>
            <person name="Kozyavkin S."/>
            <person name="Weimer B.C."/>
            <person name="Mills D.A."/>
        </authorList>
    </citation>
    <scope>NUCLEOTIDE SEQUENCE [LARGE SCALE GENOMIC DNA]</scope>
    <source>
        <strain>ATCC BAA-491 / LMD-9</strain>
    </source>
</reference>
<evidence type="ECO:0000255" key="1">
    <source>
        <dbReference type="HAMAP-Rule" id="MF_01318"/>
    </source>
</evidence>
<evidence type="ECO:0000305" key="2"/>
<name>RL1_STRTD</name>
<dbReference type="EMBL" id="CP000419">
    <property type="protein sequence ID" value="ABJ66928.1"/>
    <property type="molecule type" value="Genomic_DNA"/>
</dbReference>
<dbReference type="RefSeq" id="WP_002946412.1">
    <property type="nucleotide sequence ID" value="NC_008532.1"/>
</dbReference>
<dbReference type="SMR" id="Q03IP4"/>
<dbReference type="GeneID" id="66899553"/>
<dbReference type="KEGG" id="ste:STER_1797"/>
<dbReference type="HOGENOM" id="CLU_062853_0_0_9"/>
<dbReference type="GO" id="GO:0015934">
    <property type="term" value="C:large ribosomal subunit"/>
    <property type="evidence" value="ECO:0007669"/>
    <property type="project" value="InterPro"/>
</dbReference>
<dbReference type="GO" id="GO:0019843">
    <property type="term" value="F:rRNA binding"/>
    <property type="evidence" value="ECO:0007669"/>
    <property type="project" value="UniProtKB-UniRule"/>
</dbReference>
<dbReference type="GO" id="GO:0003735">
    <property type="term" value="F:structural constituent of ribosome"/>
    <property type="evidence" value="ECO:0007669"/>
    <property type="project" value="InterPro"/>
</dbReference>
<dbReference type="GO" id="GO:0000049">
    <property type="term" value="F:tRNA binding"/>
    <property type="evidence" value="ECO:0007669"/>
    <property type="project" value="UniProtKB-KW"/>
</dbReference>
<dbReference type="GO" id="GO:0006417">
    <property type="term" value="P:regulation of translation"/>
    <property type="evidence" value="ECO:0007669"/>
    <property type="project" value="UniProtKB-KW"/>
</dbReference>
<dbReference type="GO" id="GO:0006412">
    <property type="term" value="P:translation"/>
    <property type="evidence" value="ECO:0007669"/>
    <property type="project" value="UniProtKB-UniRule"/>
</dbReference>
<dbReference type="CDD" id="cd00403">
    <property type="entry name" value="Ribosomal_L1"/>
    <property type="match status" value="1"/>
</dbReference>
<dbReference type="FunFam" id="3.40.50.790:FF:000001">
    <property type="entry name" value="50S ribosomal protein L1"/>
    <property type="match status" value="1"/>
</dbReference>
<dbReference type="Gene3D" id="3.30.190.20">
    <property type="match status" value="1"/>
</dbReference>
<dbReference type="Gene3D" id="3.40.50.790">
    <property type="match status" value="1"/>
</dbReference>
<dbReference type="HAMAP" id="MF_01318_B">
    <property type="entry name" value="Ribosomal_uL1_B"/>
    <property type="match status" value="1"/>
</dbReference>
<dbReference type="InterPro" id="IPR005878">
    <property type="entry name" value="Ribosom_uL1_bac-type"/>
</dbReference>
<dbReference type="InterPro" id="IPR002143">
    <property type="entry name" value="Ribosomal_uL1"/>
</dbReference>
<dbReference type="InterPro" id="IPR023674">
    <property type="entry name" value="Ribosomal_uL1-like"/>
</dbReference>
<dbReference type="InterPro" id="IPR028364">
    <property type="entry name" value="Ribosomal_uL1/biogenesis"/>
</dbReference>
<dbReference type="InterPro" id="IPR016095">
    <property type="entry name" value="Ribosomal_uL1_3-a/b-sand"/>
</dbReference>
<dbReference type="InterPro" id="IPR023673">
    <property type="entry name" value="Ribosomal_uL1_CS"/>
</dbReference>
<dbReference type="NCBIfam" id="TIGR01169">
    <property type="entry name" value="rplA_bact"/>
    <property type="match status" value="1"/>
</dbReference>
<dbReference type="PANTHER" id="PTHR36427">
    <property type="entry name" value="54S RIBOSOMAL PROTEIN L1, MITOCHONDRIAL"/>
    <property type="match status" value="1"/>
</dbReference>
<dbReference type="PANTHER" id="PTHR36427:SF3">
    <property type="entry name" value="LARGE RIBOSOMAL SUBUNIT PROTEIN UL1M"/>
    <property type="match status" value="1"/>
</dbReference>
<dbReference type="Pfam" id="PF00687">
    <property type="entry name" value="Ribosomal_L1"/>
    <property type="match status" value="1"/>
</dbReference>
<dbReference type="PIRSF" id="PIRSF002155">
    <property type="entry name" value="Ribosomal_L1"/>
    <property type="match status" value="1"/>
</dbReference>
<dbReference type="SUPFAM" id="SSF56808">
    <property type="entry name" value="Ribosomal protein L1"/>
    <property type="match status" value="1"/>
</dbReference>
<dbReference type="PROSITE" id="PS01199">
    <property type="entry name" value="RIBOSOMAL_L1"/>
    <property type="match status" value="1"/>
</dbReference>
<keyword id="KW-0678">Repressor</keyword>
<keyword id="KW-0687">Ribonucleoprotein</keyword>
<keyword id="KW-0689">Ribosomal protein</keyword>
<keyword id="KW-0694">RNA-binding</keyword>
<keyword id="KW-0699">rRNA-binding</keyword>
<keyword id="KW-0810">Translation regulation</keyword>
<keyword id="KW-0820">tRNA-binding</keyword>
<protein>
    <recommendedName>
        <fullName evidence="1">Large ribosomal subunit protein uL1</fullName>
    </recommendedName>
    <alternativeName>
        <fullName evidence="2">50S ribosomal protein L1</fullName>
    </alternativeName>
</protein>
<gene>
    <name evidence="1" type="primary">rplA</name>
    <name type="ordered locus">STER_1797</name>
</gene>
<feature type="chain" id="PRO_0000308122" description="Large ribosomal subunit protein uL1">
    <location>
        <begin position="1"/>
        <end position="229"/>
    </location>
</feature>
<proteinExistence type="inferred from homology"/>
<sequence>MAKKSKQMRAALEKIDSTKAYSVEEAVALAQETNFAKFDATVEVSYNLNIDVKKADQQIRGAMVLPNGTGKTQRVLVFARGAKAEEAKAAGADFVGEDELVDKINGGWLDFDVVVATPDMMAIVGRLGRVLGPRNLMPNPKTGTVTMDVAKAVEESKGGKITYRADKAGNVQAIIGKVSFEAEKLVENFKAFNDAIQKAKPATAKGVYITNLSITTTQGPGIKVDPNSL</sequence>
<accession>Q03IP4</accession>